<evidence type="ECO:0000255" key="1">
    <source>
        <dbReference type="HAMAP-Rule" id="MF_00550"/>
    </source>
</evidence>
<feature type="chain" id="PRO_0000185295" description="Peptidase T">
    <location>
        <begin position="1"/>
        <end position="412"/>
    </location>
</feature>
<feature type="active site" evidence="1">
    <location>
        <position position="85"/>
    </location>
</feature>
<feature type="active site" description="Proton acceptor" evidence="1">
    <location>
        <position position="179"/>
    </location>
</feature>
<feature type="binding site" evidence="1">
    <location>
        <position position="83"/>
    </location>
    <ligand>
        <name>Zn(2+)</name>
        <dbReference type="ChEBI" id="CHEBI:29105"/>
        <label>1</label>
    </ligand>
</feature>
<feature type="binding site" evidence="1">
    <location>
        <position position="145"/>
    </location>
    <ligand>
        <name>Zn(2+)</name>
        <dbReference type="ChEBI" id="CHEBI:29105"/>
        <label>1</label>
    </ligand>
</feature>
<feature type="binding site" evidence="1">
    <location>
        <position position="145"/>
    </location>
    <ligand>
        <name>Zn(2+)</name>
        <dbReference type="ChEBI" id="CHEBI:29105"/>
        <label>2</label>
    </ligand>
</feature>
<feature type="binding site" evidence="1">
    <location>
        <position position="180"/>
    </location>
    <ligand>
        <name>Zn(2+)</name>
        <dbReference type="ChEBI" id="CHEBI:29105"/>
        <label>2</label>
    </ligand>
</feature>
<feature type="binding site" evidence="1">
    <location>
        <position position="202"/>
    </location>
    <ligand>
        <name>Zn(2+)</name>
        <dbReference type="ChEBI" id="CHEBI:29105"/>
        <label>1</label>
    </ligand>
</feature>
<feature type="binding site" evidence="1">
    <location>
        <position position="384"/>
    </location>
    <ligand>
        <name>Zn(2+)</name>
        <dbReference type="ChEBI" id="CHEBI:29105"/>
        <label>2</label>
    </ligand>
</feature>
<accession>P58794</accession>
<proteinExistence type="inferred from homology"/>
<organism>
    <name type="scientific">Fusobacterium nucleatum subsp. nucleatum (strain ATCC 25586 / DSM 15643 / BCRC 10681 / CIP 101130 / JCM 8532 / KCTC 2640 / LMG 13131 / VPI 4355)</name>
    <dbReference type="NCBI Taxonomy" id="190304"/>
    <lineage>
        <taxon>Bacteria</taxon>
        <taxon>Fusobacteriati</taxon>
        <taxon>Fusobacteriota</taxon>
        <taxon>Fusobacteriia</taxon>
        <taxon>Fusobacteriales</taxon>
        <taxon>Fusobacteriaceae</taxon>
        <taxon>Fusobacterium</taxon>
    </lineage>
</organism>
<gene>
    <name evidence="1" type="primary">pepT</name>
    <name type="ordered locus">FN0733</name>
</gene>
<sequence length="412" mass="46271">MDSKKYSTLKERFLRYVKFNTRSDDASETIPSTPSQMEFAKMLKKELEELGLSNIFINKACFVNATLPSNIDKKVATVGFIAHMDTADFNAEGISPQIVENYDGKDIVLNKEQNIVLKVEEFPNLKNYISKTLITTDGTTLLGADDKSGIVEIIEAVKYLKEHPEIKHGDIKIAFGPDEEIGRGADYFDVKEFAADYAYTMDGGPIGELEYESFNAAQAKFKIKGVSVHPGTAKGKMINASLIASEIIEMFPKDEVPEKTEGYEGFYFLDEMKSNCEEGEVVYIIRDHDKAKFLAKKEFVKELVEKVNKKYGREVVKLELKDEYYNMGEIIKDHMYVVDIAKQAMENLGIKPLIKAIRGGTDGSKISFMGLPTPNIFAGGENFHGKYEFVALESMEKATDVIVEIVKLNAER</sequence>
<dbReference type="EC" id="3.4.11.4" evidence="1"/>
<dbReference type="EMBL" id="AE009951">
    <property type="protein sequence ID" value="AAL94929.1"/>
    <property type="molecule type" value="Genomic_DNA"/>
</dbReference>
<dbReference type="RefSeq" id="NP_603630.1">
    <property type="nucleotide sequence ID" value="NC_003454.1"/>
</dbReference>
<dbReference type="RefSeq" id="WP_011016614.1">
    <property type="nucleotide sequence ID" value="NZ_CP028101.1"/>
</dbReference>
<dbReference type="SMR" id="P58794"/>
<dbReference type="FunCoup" id="P58794">
    <property type="interactions" value="17"/>
</dbReference>
<dbReference type="STRING" id="190304.FN0733"/>
<dbReference type="MEROPS" id="M20.003"/>
<dbReference type="PaxDb" id="190304-FN0733"/>
<dbReference type="EnsemblBacteria" id="AAL94929">
    <property type="protein sequence ID" value="AAL94929"/>
    <property type="gene ID" value="FN0733"/>
</dbReference>
<dbReference type="GeneID" id="79783726"/>
<dbReference type="KEGG" id="fnu:FN0733"/>
<dbReference type="PATRIC" id="fig|190304.8.peg.1296"/>
<dbReference type="eggNOG" id="COG2195">
    <property type="taxonomic scope" value="Bacteria"/>
</dbReference>
<dbReference type="HOGENOM" id="CLU_053676_0_0_0"/>
<dbReference type="InParanoid" id="P58794"/>
<dbReference type="BioCyc" id="FNUC190304:G1FZS-1319-MONOMER"/>
<dbReference type="Proteomes" id="UP000002521">
    <property type="component" value="Chromosome"/>
</dbReference>
<dbReference type="GO" id="GO:0005829">
    <property type="term" value="C:cytosol"/>
    <property type="evidence" value="ECO:0000318"/>
    <property type="project" value="GO_Central"/>
</dbReference>
<dbReference type="GO" id="GO:0008237">
    <property type="term" value="F:metallopeptidase activity"/>
    <property type="evidence" value="ECO:0007669"/>
    <property type="project" value="UniProtKB-KW"/>
</dbReference>
<dbReference type="GO" id="GO:0045148">
    <property type="term" value="F:tripeptide aminopeptidase activity"/>
    <property type="evidence" value="ECO:0000318"/>
    <property type="project" value="GO_Central"/>
</dbReference>
<dbReference type="GO" id="GO:0008270">
    <property type="term" value="F:zinc ion binding"/>
    <property type="evidence" value="ECO:0007669"/>
    <property type="project" value="UniProtKB-UniRule"/>
</dbReference>
<dbReference type="GO" id="GO:0043171">
    <property type="term" value="P:peptide catabolic process"/>
    <property type="evidence" value="ECO:0007669"/>
    <property type="project" value="UniProtKB-UniRule"/>
</dbReference>
<dbReference type="GO" id="GO:0006508">
    <property type="term" value="P:proteolysis"/>
    <property type="evidence" value="ECO:0007669"/>
    <property type="project" value="UniProtKB-UniRule"/>
</dbReference>
<dbReference type="CDD" id="cd03892">
    <property type="entry name" value="M20_peptT"/>
    <property type="match status" value="1"/>
</dbReference>
<dbReference type="FunFam" id="3.30.70.360:FF:000002">
    <property type="entry name" value="Peptidase T"/>
    <property type="match status" value="1"/>
</dbReference>
<dbReference type="Gene3D" id="3.30.70.360">
    <property type="match status" value="1"/>
</dbReference>
<dbReference type="Gene3D" id="3.40.630.10">
    <property type="entry name" value="Zn peptidases"/>
    <property type="match status" value="1"/>
</dbReference>
<dbReference type="HAMAP" id="MF_00550">
    <property type="entry name" value="Aminopeptidase_M20"/>
    <property type="match status" value="1"/>
</dbReference>
<dbReference type="InterPro" id="IPR001261">
    <property type="entry name" value="ArgE/DapE_CS"/>
</dbReference>
<dbReference type="InterPro" id="IPR036264">
    <property type="entry name" value="Bact_exopeptidase_dim_dom"/>
</dbReference>
<dbReference type="InterPro" id="IPR002933">
    <property type="entry name" value="Peptidase_M20"/>
</dbReference>
<dbReference type="InterPro" id="IPR011650">
    <property type="entry name" value="Peptidase_M20_dimer"/>
</dbReference>
<dbReference type="InterPro" id="IPR010161">
    <property type="entry name" value="Peptidase_M20B"/>
</dbReference>
<dbReference type="NCBIfam" id="TIGR01882">
    <property type="entry name" value="peptidase-T"/>
    <property type="match status" value="1"/>
</dbReference>
<dbReference type="NCBIfam" id="NF003976">
    <property type="entry name" value="PRK05469.1"/>
    <property type="match status" value="1"/>
</dbReference>
<dbReference type="NCBIfam" id="NF009920">
    <property type="entry name" value="PRK13381.1"/>
    <property type="match status" value="1"/>
</dbReference>
<dbReference type="PANTHER" id="PTHR42994">
    <property type="entry name" value="PEPTIDASE T"/>
    <property type="match status" value="1"/>
</dbReference>
<dbReference type="PANTHER" id="PTHR42994:SF1">
    <property type="entry name" value="PEPTIDASE T"/>
    <property type="match status" value="1"/>
</dbReference>
<dbReference type="Pfam" id="PF07687">
    <property type="entry name" value="M20_dimer"/>
    <property type="match status" value="1"/>
</dbReference>
<dbReference type="Pfam" id="PF01546">
    <property type="entry name" value="Peptidase_M20"/>
    <property type="match status" value="1"/>
</dbReference>
<dbReference type="PIRSF" id="PIRSF037215">
    <property type="entry name" value="Peptidase_M20B"/>
    <property type="match status" value="1"/>
</dbReference>
<dbReference type="SUPFAM" id="SSF55031">
    <property type="entry name" value="Bacterial exopeptidase dimerisation domain"/>
    <property type="match status" value="1"/>
</dbReference>
<dbReference type="SUPFAM" id="SSF53187">
    <property type="entry name" value="Zn-dependent exopeptidases"/>
    <property type="match status" value="1"/>
</dbReference>
<dbReference type="PROSITE" id="PS00758">
    <property type="entry name" value="ARGE_DAPE_CPG2_1"/>
    <property type="match status" value="1"/>
</dbReference>
<dbReference type="PROSITE" id="PS00759">
    <property type="entry name" value="ARGE_DAPE_CPG2_2"/>
    <property type="match status" value="1"/>
</dbReference>
<comment type="function">
    <text evidence="1">Cleaves the N-terminal amino acid of tripeptides.</text>
</comment>
<comment type="catalytic activity">
    <reaction evidence="1">
        <text>Release of the N-terminal residue from a tripeptide.</text>
        <dbReference type="EC" id="3.4.11.4"/>
    </reaction>
</comment>
<comment type="cofactor">
    <cofactor evidence="1">
        <name>Zn(2+)</name>
        <dbReference type="ChEBI" id="CHEBI:29105"/>
    </cofactor>
    <text evidence="1">Binds 2 Zn(2+) ions per subunit.</text>
</comment>
<comment type="subcellular location">
    <subcellularLocation>
        <location evidence="1">Cytoplasm</location>
    </subcellularLocation>
</comment>
<comment type="similarity">
    <text evidence="1">Belongs to the peptidase M20B family.</text>
</comment>
<protein>
    <recommendedName>
        <fullName evidence="1">Peptidase T</fullName>
        <ecNumber evidence="1">3.4.11.4</ecNumber>
    </recommendedName>
    <alternativeName>
        <fullName evidence="1">Aminotripeptidase</fullName>
        <shortName evidence="1">Tripeptidase</shortName>
    </alternativeName>
    <alternativeName>
        <fullName evidence="1">Tripeptide aminopeptidase</fullName>
    </alternativeName>
</protein>
<keyword id="KW-0031">Aminopeptidase</keyword>
<keyword id="KW-0963">Cytoplasm</keyword>
<keyword id="KW-0378">Hydrolase</keyword>
<keyword id="KW-0479">Metal-binding</keyword>
<keyword id="KW-0482">Metalloprotease</keyword>
<keyword id="KW-0645">Protease</keyword>
<keyword id="KW-1185">Reference proteome</keyword>
<keyword id="KW-0862">Zinc</keyword>
<name>PEPT_FUSNN</name>
<reference key="1">
    <citation type="journal article" date="2002" name="J. Bacteriol.">
        <title>Genome sequence and analysis of the oral bacterium Fusobacterium nucleatum strain ATCC 25586.</title>
        <authorList>
            <person name="Kapatral V."/>
            <person name="Anderson I."/>
            <person name="Ivanova N."/>
            <person name="Reznik G."/>
            <person name="Los T."/>
            <person name="Lykidis A."/>
            <person name="Bhattacharyya A."/>
            <person name="Bartman A."/>
            <person name="Gardner W."/>
            <person name="Grechkin G."/>
            <person name="Zhu L."/>
            <person name="Vasieva O."/>
            <person name="Chu L."/>
            <person name="Kogan Y."/>
            <person name="Chaga O."/>
            <person name="Goltsman E."/>
            <person name="Bernal A."/>
            <person name="Larsen N."/>
            <person name="D'Souza M."/>
            <person name="Walunas T."/>
            <person name="Pusch G."/>
            <person name="Haselkorn R."/>
            <person name="Fonstein M."/>
            <person name="Kyrpides N.C."/>
            <person name="Overbeek R."/>
        </authorList>
    </citation>
    <scope>NUCLEOTIDE SEQUENCE [LARGE SCALE GENOMIC DNA]</scope>
    <source>
        <strain>ATCC 25586 / DSM 15643 / BCRC 10681 / CIP 101130 / JCM 8532 / KCTC 2640 / LMG 13131 / VPI 4355</strain>
    </source>
</reference>